<dbReference type="EC" id="1.1.1.37" evidence="1"/>
<dbReference type="EMBL" id="CP000685">
    <property type="protein sequence ID" value="ABQ05283.1"/>
    <property type="molecule type" value="Genomic_DNA"/>
</dbReference>
<dbReference type="RefSeq" id="WP_012024322.1">
    <property type="nucleotide sequence ID" value="NC_009441.1"/>
</dbReference>
<dbReference type="SMR" id="A5FHP3"/>
<dbReference type="STRING" id="376686.Fjoh_2255"/>
<dbReference type="KEGG" id="fjo:Fjoh_2255"/>
<dbReference type="eggNOG" id="COG0039">
    <property type="taxonomic scope" value="Bacteria"/>
</dbReference>
<dbReference type="HOGENOM" id="CLU_045401_2_1_10"/>
<dbReference type="OrthoDB" id="9802969at2"/>
<dbReference type="Proteomes" id="UP000006694">
    <property type="component" value="Chromosome"/>
</dbReference>
<dbReference type="GO" id="GO:0004459">
    <property type="term" value="F:L-lactate dehydrogenase activity"/>
    <property type="evidence" value="ECO:0007669"/>
    <property type="project" value="TreeGrafter"/>
</dbReference>
<dbReference type="GO" id="GO:0030060">
    <property type="term" value="F:L-malate dehydrogenase (NAD+) activity"/>
    <property type="evidence" value="ECO:0007669"/>
    <property type="project" value="UniProtKB-UniRule"/>
</dbReference>
<dbReference type="GO" id="GO:0006089">
    <property type="term" value="P:lactate metabolic process"/>
    <property type="evidence" value="ECO:0007669"/>
    <property type="project" value="TreeGrafter"/>
</dbReference>
<dbReference type="GO" id="GO:0006099">
    <property type="term" value="P:tricarboxylic acid cycle"/>
    <property type="evidence" value="ECO:0007669"/>
    <property type="project" value="UniProtKB-UniRule"/>
</dbReference>
<dbReference type="CDD" id="cd01339">
    <property type="entry name" value="LDH-like_MDH"/>
    <property type="match status" value="1"/>
</dbReference>
<dbReference type="FunFam" id="3.40.50.720:FF:000018">
    <property type="entry name" value="Malate dehydrogenase"/>
    <property type="match status" value="1"/>
</dbReference>
<dbReference type="Gene3D" id="3.90.110.10">
    <property type="entry name" value="Lactate dehydrogenase/glycoside hydrolase, family 4, C-terminal"/>
    <property type="match status" value="1"/>
</dbReference>
<dbReference type="Gene3D" id="3.40.50.720">
    <property type="entry name" value="NAD(P)-binding Rossmann-like Domain"/>
    <property type="match status" value="1"/>
</dbReference>
<dbReference type="HAMAP" id="MF_00487">
    <property type="entry name" value="Malate_dehydrog_3"/>
    <property type="match status" value="1"/>
</dbReference>
<dbReference type="InterPro" id="IPR001557">
    <property type="entry name" value="L-lactate/malate_DH"/>
</dbReference>
<dbReference type="InterPro" id="IPR022383">
    <property type="entry name" value="Lactate/malate_DH_C"/>
</dbReference>
<dbReference type="InterPro" id="IPR001236">
    <property type="entry name" value="Lactate/malate_DH_N"/>
</dbReference>
<dbReference type="InterPro" id="IPR015955">
    <property type="entry name" value="Lactate_DH/Glyco_Ohase_4_C"/>
</dbReference>
<dbReference type="InterPro" id="IPR011275">
    <property type="entry name" value="Malate_DH_type3"/>
</dbReference>
<dbReference type="InterPro" id="IPR036291">
    <property type="entry name" value="NAD(P)-bd_dom_sf"/>
</dbReference>
<dbReference type="NCBIfam" id="TIGR01763">
    <property type="entry name" value="MalateDH_bact"/>
    <property type="match status" value="1"/>
</dbReference>
<dbReference type="NCBIfam" id="NF004863">
    <property type="entry name" value="PRK06223.1"/>
    <property type="match status" value="1"/>
</dbReference>
<dbReference type="PANTHER" id="PTHR43128">
    <property type="entry name" value="L-2-HYDROXYCARBOXYLATE DEHYDROGENASE (NAD(P)(+))"/>
    <property type="match status" value="1"/>
</dbReference>
<dbReference type="PANTHER" id="PTHR43128:SF16">
    <property type="entry name" value="L-LACTATE DEHYDROGENASE"/>
    <property type="match status" value="1"/>
</dbReference>
<dbReference type="Pfam" id="PF02866">
    <property type="entry name" value="Ldh_1_C"/>
    <property type="match status" value="1"/>
</dbReference>
<dbReference type="Pfam" id="PF00056">
    <property type="entry name" value="Ldh_1_N"/>
    <property type="match status" value="1"/>
</dbReference>
<dbReference type="PIRSF" id="PIRSF000102">
    <property type="entry name" value="Lac_mal_DH"/>
    <property type="match status" value="1"/>
</dbReference>
<dbReference type="PRINTS" id="PR00086">
    <property type="entry name" value="LLDHDRGNASE"/>
</dbReference>
<dbReference type="SUPFAM" id="SSF56327">
    <property type="entry name" value="LDH C-terminal domain-like"/>
    <property type="match status" value="1"/>
</dbReference>
<dbReference type="SUPFAM" id="SSF51735">
    <property type="entry name" value="NAD(P)-binding Rossmann-fold domains"/>
    <property type="match status" value="1"/>
</dbReference>
<gene>
    <name evidence="1" type="primary">mdh</name>
    <name type="ordered locus">Fjoh_2255</name>
</gene>
<proteinExistence type="inferred from homology"/>
<reference key="1">
    <citation type="journal article" date="2009" name="Appl. Environ. Microbiol.">
        <title>Novel features of the polysaccharide-digesting gliding bacterium Flavobacterium johnsoniae as revealed by genome sequence analysis.</title>
        <authorList>
            <person name="McBride M.J."/>
            <person name="Xie G."/>
            <person name="Martens E.C."/>
            <person name="Lapidus A."/>
            <person name="Henrissat B."/>
            <person name="Rhodes R.G."/>
            <person name="Goltsman E."/>
            <person name="Wang W."/>
            <person name="Xu J."/>
            <person name="Hunnicutt D.W."/>
            <person name="Staroscik A.M."/>
            <person name="Hoover T.R."/>
            <person name="Cheng Y.Q."/>
            <person name="Stein J.L."/>
        </authorList>
    </citation>
    <scope>NUCLEOTIDE SEQUENCE [LARGE SCALE GENOMIC DNA]</scope>
    <source>
        <strain>ATCC 17061 / DSM 2064 / JCM 8514 / BCRC 14874 / CCUG 350202 / NBRC 14942 / NCIMB 11054 / UW101</strain>
    </source>
</reference>
<protein>
    <recommendedName>
        <fullName evidence="1">Malate dehydrogenase</fullName>
        <ecNumber evidence="1">1.1.1.37</ecNumber>
    </recommendedName>
</protein>
<comment type="function">
    <text evidence="1">Catalyzes the reversible oxidation of malate to oxaloacetate.</text>
</comment>
<comment type="catalytic activity">
    <reaction evidence="1">
        <text>(S)-malate + NAD(+) = oxaloacetate + NADH + H(+)</text>
        <dbReference type="Rhea" id="RHEA:21432"/>
        <dbReference type="ChEBI" id="CHEBI:15378"/>
        <dbReference type="ChEBI" id="CHEBI:15589"/>
        <dbReference type="ChEBI" id="CHEBI:16452"/>
        <dbReference type="ChEBI" id="CHEBI:57540"/>
        <dbReference type="ChEBI" id="CHEBI:57945"/>
        <dbReference type="EC" id="1.1.1.37"/>
    </reaction>
</comment>
<comment type="similarity">
    <text evidence="1">Belongs to the LDH/MDH superfamily. MDH type 3 family.</text>
</comment>
<evidence type="ECO:0000255" key="1">
    <source>
        <dbReference type="HAMAP-Rule" id="MF_00487"/>
    </source>
</evidence>
<sequence>MKVTIVGAGNVGATCADVISYRGIASEVVLLDIKEGFAEGKALDITQCATNTGFNTKVSGVTNDYSKTAGSDVVVITSGIPRKPGMTREELIGINAGIVKTVAENVLKYSPNTIIVVVSNPMDTMTYLALKATGLPKNRIIGMGGALDSSRFRTYLSLALDKPANDISAMVIGGHGDTTMIPLTRLASYNGIPVSQFLSEDVLQKVAADTMVGGATLTGLLGTSAWYAPGASVAYLVDSILNDQKKMIACSVFVEGEYGQNDICIGVPCIIGKNGVEEIVNINLNDQEKALFAKSADAVRGMNDALKSILV</sequence>
<feature type="chain" id="PRO_1000081360" description="Malate dehydrogenase">
    <location>
        <begin position="1"/>
        <end position="311"/>
    </location>
</feature>
<feature type="active site" description="Proton acceptor" evidence="1">
    <location>
        <position position="175"/>
    </location>
</feature>
<feature type="binding site" evidence="1">
    <location>
        <begin position="7"/>
        <end position="12"/>
    </location>
    <ligand>
        <name>NAD(+)</name>
        <dbReference type="ChEBI" id="CHEBI:57540"/>
    </ligand>
</feature>
<feature type="binding site" evidence="1">
    <location>
        <position position="32"/>
    </location>
    <ligand>
        <name>NAD(+)</name>
        <dbReference type="ChEBI" id="CHEBI:57540"/>
    </ligand>
</feature>
<feature type="binding site" evidence="1">
    <location>
        <position position="82"/>
    </location>
    <ligand>
        <name>substrate</name>
    </ligand>
</feature>
<feature type="binding site" evidence="1">
    <location>
        <position position="88"/>
    </location>
    <ligand>
        <name>substrate</name>
    </ligand>
</feature>
<feature type="binding site" evidence="1">
    <location>
        <position position="95"/>
    </location>
    <ligand>
        <name>NAD(+)</name>
        <dbReference type="ChEBI" id="CHEBI:57540"/>
    </ligand>
</feature>
<feature type="binding site" evidence="1">
    <location>
        <begin position="118"/>
        <end position="120"/>
    </location>
    <ligand>
        <name>NAD(+)</name>
        <dbReference type="ChEBI" id="CHEBI:57540"/>
    </ligand>
</feature>
<feature type="binding site" evidence="1">
    <location>
        <position position="120"/>
    </location>
    <ligand>
        <name>substrate</name>
    </ligand>
</feature>
<feature type="binding site" evidence="1">
    <location>
        <position position="151"/>
    </location>
    <ligand>
        <name>substrate</name>
    </ligand>
</feature>
<organism>
    <name type="scientific">Flavobacterium johnsoniae (strain ATCC 17061 / DSM 2064 / JCM 8514 / BCRC 14874 / CCUG 350202 / NBRC 14942 / NCIMB 11054 / UW101)</name>
    <name type="common">Cytophaga johnsonae</name>
    <dbReference type="NCBI Taxonomy" id="376686"/>
    <lineage>
        <taxon>Bacteria</taxon>
        <taxon>Pseudomonadati</taxon>
        <taxon>Bacteroidota</taxon>
        <taxon>Flavobacteriia</taxon>
        <taxon>Flavobacteriales</taxon>
        <taxon>Flavobacteriaceae</taxon>
        <taxon>Flavobacterium</taxon>
    </lineage>
</organism>
<accession>A5FHP3</accession>
<keyword id="KW-0520">NAD</keyword>
<keyword id="KW-0560">Oxidoreductase</keyword>
<keyword id="KW-0816">Tricarboxylic acid cycle</keyword>
<name>MDH_FLAJ1</name>